<reference key="1">
    <citation type="submission" date="1996-01" db="EMBL/GenBank/DDBJ databases">
        <authorList>
            <person name="Geijtenbeek T.B.H."/>
            <person name="der Helm H.A."/>
            <person name="Snoek G.T."/>
            <person name="Wirtz K.W.A."/>
        </authorList>
    </citation>
    <scope>NUCLEOTIDE SEQUENCE [MRNA]</scope>
    <source>
        <strain>SWR/J</strain>
    </source>
</reference>
<reference key="2">
    <citation type="journal article" date="2005" name="Science">
        <title>The transcriptional landscape of the mammalian genome.</title>
        <authorList>
            <person name="Carninci P."/>
            <person name="Kasukawa T."/>
            <person name="Katayama S."/>
            <person name="Gough J."/>
            <person name="Frith M.C."/>
            <person name="Maeda N."/>
            <person name="Oyama R."/>
            <person name="Ravasi T."/>
            <person name="Lenhard B."/>
            <person name="Wells C."/>
            <person name="Kodzius R."/>
            <person name="Shimokawa K."/>
            <person name="Bajic V.B."/>
            <person name="Brenner S.E."/>
            <person name="Batalov S."/>
            <person name="Forrest A.R."/>
            <person name="Zavolan M."/>
            <person name="Davis M.J."/>
            <person name="Wilming L.G."/>
            <person name="Aidinis V."/>
            <person name="Allen J.E."/>
            <person name="Ambesi-Impiombato A."/>
            <person name="Apweiler R."/>
            <person name="Aturaliya R.N."/>
            <person name="Bailey T.L."/>
            <person name="Bansal M."/>
            <person name="Baxter L."/>
            <person name="Beisel K.W."/>
            <person name="Bersano T."/>
            <person name="Bono H."/>
            <person name="Chalk A.M."/>
            <person name="Chiu K.P."/>
            <person name="Choudhary V."/>
            <person name="Christoffels A."/>
            <person name="Clutterbuck D.R."/>
            <person name="Crowe M.L."/>
            <person name="Dalla E."/>
            <person name="Dalrymple B.P."/>
            <person name="de Bono B."/>
            <person name="Della Gatta G."/>
            <person name="di Bernardo D."/>
            <person name="Down T."/>
            <person name="Engstrom P."/>
            <person name="Fagiolini M."/>
            <person name="Faulkner G."/>
            <person name="Fletcher C.F."/>
            <person name="Fukushima T."/>
            <person name="Furuno M."/>
            <person name="Futaki S."/>
            <person name="Gariboldi M."/>
            <person name="Georgii-Hemming P."/>
            <person name="Gingeras T.R."/>
            <person name="Gojobori T."/>
            <person name="Green R.E."/>
            <person name="Gustincich S."/>
            <person name="Harbers M."/>
            <person name="Hayashi Y."/>
            <person name="Hensch T.K."/>
            <person name="Hirokawa N."/>
            <person name="Hill D."/>
            <person name="Huminiecki L."/>
            <person name="Iacono M."/>
            <person name="Ikeo K."/>
            <person name="Iwama A."/>
            <person name="Ishikawa T."/>
            <person name="Jakt M."/>
            <person name="Kanapin A."/>
            <person name="Katoh M."/>
            <person name="Kawasawa Y."/>
            <person name="Kelso J."/>
            <person name="Kitamura H."/>
            <person name="Kitano H."/>
            <person name="Kollias G."/>
            <person name="Krishnan S.P."/>
            <person name="Kruger A."/>
            <person name="Kummerfeld S.K."/>
            <person name="Kurochkin I.V."/>
            <person name="Lareau L.F."/>
            <person name="Lazarevic D."/>
            <person name="Lipovich L."/>
            <person name="Liu J."/>
            <person name="Liuni S."/>
            <person name="McWilliam S."/>
            <person name="Madan Babu M."/>
            <person name="Madera M."/>
            <person name="Marchionni L."/>
            <person name="Matsuda H."/>
            <person name="Matsuzawa S."/>
            <person name="Miki H."/>
            <person name="Mignone F."/>
            <person name="Miyake S."/>
            <person name="Morris K."/>
            <person name="Mottagui-Tabar S."/>
            <person name="Mulder N."/>
            <person name="Nakano N."/>
            <person name="Nakauchi H."/>
            <person name="Ng P."/>
            <person name="Nilsson R."/>
            <person name="Nishiguchi S."/>
            <person name="Nishikawa S."/>
            <person name="Nori F."/>
            <person name="Ohara O."/>
            <person name="Okazaki Y."/>
            <person name="Orlando V."/>
            <person name="Pang K.C."/>
            <person name="Pavan W.J."/>
            <person name="Pavesi G."/>
            <person name="Pesole G."/>
            <person name="Petrovsky N."/>
            <person name="Piazza S."/>
            <person name="Reed J."/>
            <person name="Reid J.F."/>
            <person name="Ring B.Z."/>
            <person name="Ringwald M."/>
            <person name="Rost B."/>
            <person name="Ruan Y."/>
            <person name="Salzberg S.L."/>
            <person name="Sandelin A."/>
            <person name="Schneider C."/>
            <person name="Schoenbach C."/>
            <person name="Sekiguchi K."/>
            <person name="Semple C.A."/>
            <person name="Seno S."/>
            <person name="Sessa L."/>
            <person name="Sheng Y."/>
            <person name="Shibata Y."/>
            <person name="Shimada H."/>
            <person name="Shimada K."/>
            <person name="Silva D."/>
            <person name="Sinclair B."/>
            <person name="Sperling S."/>
            <person name="Stupka E."/>
            <person name="Sugiura K."/>
            <person name="Sultana R."/>
            <person name="Takenaka Y."/>
            <person name="Taki K."/>
            <person name="Tammoja K."/>
            <person name="Tan S.L."/>
            <person name="Tang S."/>
            <person name="Taylor M.S."/>
            <person name="Tegner J."/>
            <person name="Teichmann S.A."/>
            <person name="Ueda H.R."/>
            <person name="van Nimwegen E."/>
            <person name="Verardo R."/>
            <person name="Wei C.L."/>
            <person name="Yagi K."/>
            <person name="Yamanishi H."/>
            <person name="Zabarovsky E."/>
            <person name="Zhu S."/>
            <person name="Zimmer A."/>
            <person name="Hide W."/>
            <person name="Bult C."/>
            <person name="Grimmond S.M."/>
            <person name="Teasdale R.D."/>
            <person name="Liu E.T."/>
            <person name="Brusic V."/>
            <person name="Quackenbush J."/>
            <person name="Wahlestedt C."/>
            <person name="Mattick J.S."/>
            <person name="Hume D.A."/>
            <person name="Kai C."/>
            <person name="Sasaki D."/>
            <person name="Tomaru Y."/>
            <person name="Fukuda S."/>
            <person name="Kanamori-Katayama M."/>
            <person name="Suzuki M."/>
            <person name="Aoki J."/>
            <person name="Arakawa T."/>
            <person name="Iida J."/>
            <person name="Imamura K."/>
            <person name="Itoh M."/>
            <person name="Kato T."/>
            <person name="Kawaji H."/>
            <person name="Kawagashira N."/>
            <person name="Kawashima T."/>
            <person name="Kojima M."/>
            <person name="Kondo S."/>
            <person name="Konno H."/>
            <person name="Nakano K."/>
            <person name="Ninomiya N."/>
            <person name="Nishio T."/>
            <person name="Okada M."/>
            <person name="Plessy C."/>
            <person name="Shibata K."/>
            <person name="Shiraki T."/>
            <person name="Suzuki S."/>
            <person name="Tagami M."/>
            <person name="Waki K."/>
            <person name="Watahiki A."/>
            <person name="Okamura-Oho Y."/>
            <person name="Suzuki H."/>
            <person name="Kawai J."/>
            <person name="Hayashizaki Y."/>
        </authorList>
    </citation>
    <scope>NUCLEOTIDE SEQUENCE [LARGE SCALE MRNA]</scope>
    <source>
        <strain>C57BL/6J</strain>
    </source>
</reference>
<reference key="3">
    <citation type="journal article" date="1995" name="Biochem. J.">
        <title>An isoform of the phosphatidylinositol-transfer protein transfers sphingomyelin and is associated with the Golgi system.</title>
        <authorList>
            <person name="de Vries K.J."/>
            <person name="Heinrichs A.A."/>
            <person name="Cunningham E."/>
            <person name="Brunink F."/>
            <person name="Westerman J."/>
            <person name="Somerharju P.J."/>
            <person name="Cockcroft S."/>
            <person name="Wirtz K.W."/>
            <person name="Snoek G.T."/>
        </authorList>
    </citation>
    <scope>SUBCELLULAR LOCATION</scope>
    <source>
        <tissue>Brain</tissue>
    </source>
</reference>
<reference key="4">
    <citation type="journal article" date="2002" name="J. Biol. Chem.">
        <title>The Golgi localization of phosphatidylinositol transfer protein beta requires the protein kinase C-dependent phosphorylation of serine 262 and is essential for maintaining plasma membrane sphingomyelin levels.</title>
        <authorList>
            <person name="van Tiel C.M."/>
            <person name="Westerman J."/>
            <person name="Paasman M.A."/>
            <person name="Hoebens M.M."/>
            <person name="Wirtz K.W."/>
            <person name="Snoek G.T."/>
        </authorList>
    </citation>
    <scope>PHOSPHORYLATION AT SER-262</scope>
    <scope>MUTAGENESIS OF SER-165 AND SER-262</scope>
    <scope>IDENTIFICATION BY MASS SPECTROMETRY</scope>
</reference>
<reference key="5">
    <citation type="journal article" date="2010" name="Cell">
        <title>A tissue-specific atlas of mouse protein phosphorylation and expression.</title>
        <authorList>
            <person name="Huttlin E.L."/>
            <person name="Jedrychowski M.P."/>
            <person name="Elias J.E."/>
            <person name="Goswami T."/>
            <person name="Rad R."/>
            <person name="Beausoleil S.A."/>
            <person name="Villen J."/>
            <person name="Haas W."/>
            <person name="Sowa M.E."/>
            <person name="Gygi S.P."/>
        </authorList>
    </citation>
    <scope>IDENTIFICATION BY MASS SPECTROMETRY [LARGE SCALE ANALYSIS]</scope>
    <source>
        <tissue>Brain</tissue>
        <tissue>Brown adipose tissue</tissue>
        <tissue>Heart</tissue>
        <tissue>Kidney</tissue>
        <tissue>Liver</tissue>
        <tissue>Lung</tissue>
        <tissue>Pancreas</tissue>
        <tissue>Spleen</tissue>
    </source>
</reference>
<name>PIPNB_MOUSE</name>
<keyword id="KW-0007">Acetylation</keyword>
<keyword id="KW-0256">Endoplasmic reticulum</keyword>
<keyword id="KW-0333">Golgi apparatus</keyword>
<keyword id="KW-0445">Lipid transport</keyword>
<keyword id="KW-0446">Lipid-binding</keyword>
<keyword id="KW-0472">Membrane</keyword>
<keyword id="KW-0597">Phosphoprotein</keyword>
<keyword id="KW-1185">Reference proteome</keyword>
<keyword id="KW-0813">Transport</keyword>
<comment type="function">
    <text evidence="1 3">Catalyzes the transfer of phosphatidylinositol, phosphatidylcholine and sphingomyelin between membranes (By similarity). Required for COPI-mediated retrograde transport from the Golgi to the endoplasmic reticulum; phosphatidylinositol and phosphatidylcholine transfer activity is essential for this function (By similarity).</text>
</comment>
<comment type="catalytic activity">
    <reaction evidence="3">
        <text>a 1,2-diacyl-sn-glycero-3-phosphocholine(in) = a 1,2-diacyl-sn-glycero-3-phosphocholine(out)</text>
        <dbReference type="Rhea" id="RHEA:38571"/>
        <dbReference type="ChEBI" id="CHEBI:57643"/>
    </reaction>
    <physiologicalReaction direction="left-to-right" evidence="3">
        <dbReference type="Rhea" id="RHEA:38572"/>
    </physiologicalReaction>
</comment>
<comment type="catalytic activity">
    <reaction evidence="3">
        <text>a 1,2-diacyl-sn-glycero-3-phospho-(1D-myo-inositol)(in) = a 1,2-diacyl-sn-glycero-3-phospho-(1D-myo-inositol)(out)</text>
        <dbReference type="Rhea" id="RHEA:38691"/>
        <dbReference type="ChEBI" id="CHEBI:57880"/>
    </reaction>
    <physiologicalReaction direction="left-to-right" evidence="3">
        <dbReference type="Rhea" id="RHEA:38692"/>
    </physiologicalReaction>
</comment>
<comment type="catalytic activity">
    <reaction evidence="3">
        <text>an N-(acyl)-sphingosylphosphocholine(in) = an N-(acyl)-sphingosylphosphocholine(out)</text>
        <dbReference type="Rhea" id="RHEA:43776"/>
        <dbReference type="ChEBI" id="CHEBI:64583"/>
    </reaction>
    <physiologicalReaction direction="left-to-right" evidence="3">
        <dbReference type="Rhea" id="RHEA:43777"/>
    </physiologicalReaction>
</comment>
<comment type="subcellular location">
    <subcellularLocation>
        <location evidence="5">Golgi apparatus</location>
    </subcellularLocation>
    <subcellularLocation>
        <location evidence="2">Golgi apparatus membrane</location>
    </subcellularLocation>
    <subcellularLocation>
        <location evidence="2">Endoplasmic reticulum membrane</location>
    </subcellularLocation>
</comment>
<comment type="PTM">
    <text evidence="4">Constitutive phosphorylation of Ser-262 has no effect on phospholipid transfer activity but is required for Golgi targeting.</text>
</comment>
<comment type="similarity">
    <text evidence="6">Belongs to the PtdIns transfer protein family. PI transfer class I subfamily.</text>
</comment>
<sequence length="271" mass="31487">MVLIKEFRVVLPCSVQEYQVGQLYSVAEASKNETGGGEGIEVLKNEPYENDGEKGQYTHKIYHLKSKVPAFVRMIAPEGSLVFHEKAWNAYPYCRTIVTNEYMKDDFFIKIETWHKPDLGTLENVHGLDPNTWKTVEIVHIDIADRSQVEPADYKADEDPALFHSVKTKRGPLGPNWKKELANTPDCPRMCAYKLVTIKFKWWGLQSKVENFIQKQEKRIFTNLHRQLFCWIDKWIDLTMEDIRRMEDETQKELETMRKKGSVRGTSAADA</sequence>
<dbReference type="EMBL" id="U46934">
    <property type="protein sequence ID" value="AAA87593.1"/>
    <property type="molecule type" value="mRNA"/>
</dbReference>
<dbReference type="EMBL" id="AK028235">
    <property type="protein sequence ID" value="BAC25830.1"/>
    <property type="molecule type" value="mRNA"/>
</dbReference>
<dbReference type="CCDS" id="CCDS39213.1"/>
<dbReference type="RefSeq" id="NP_001288573.1">
    <property type="nucleotide sequence ID" value="NM_001301644.1"/>
</dbReference>
<dbReference type="RefSeq" id="NP_062614.1">
    <property type="nucleotide sequence ID" value="NM_019640.5"/>
</dbReference>
<dbReference type="SMR" id="P53811"/>
<dbReference type="BioGRID" id="207889">
    <property type="interactions" value="2"/>
</dbReference>
<dbReference type="FunCoup" id="P53811">
    <property type="interactions" value="3606"/>
</dbReference>
<dbReference type="STRING" id="10090.ENSMUSP00000142732"/>
<dbReference type="iPTMnet" id="P53811"/>
<dbReference type="PhosphoSitePlus" id="P53811"/>
<dbReference type="SwissPalm" id="P53811"/>
<dbReference type="jPOST" id="P53811"/>
<dbReference type="PaxDb" id="10090-ENSMUSP00000083835"/>
<dbReference type="PeptideAtlas" id="P53811"/>
<dbReference type="ProteomicsDB" id="287734"/>
<dbReference type="Pumba" id="P53811"/>
<dbReference type="Antibodypedia" id="24304">
    <property type="antibodies" value="299 antibodies from 29 providers"/>
</dbReference>
<dbReference type="DNASU" id="56305"/>
<dbReference type="Ensembl" id="ENSMUST00000086635.9">
    <property type="protein sequence ID" value="ENSMUSP00000083835.5"/>
    <property type="gene ID" value="ENSMUSG00000050017.12"/>
</dbReference>
<dbReference type="GeneID" id="56305"/>
<dbReference type="KEGG" id="mmu:56305"/>
<dbReference type="UCSC" id="uc008ysb.2">
    <property type="organism name" value="mouse"/>
</dbReference>
<dbReference type="AGR" id="MGI:1927542"/>
<dbReference type="CTD" id="23760"/>
<dbReference type="MGI" id="MGI:1927542">
    <property type="gene designation" value="Pitpnb"/>
</dbReference>
<dbReference type="VEuPathDB" id="HostDB:ENSMUSG00000050017"/>
<dbReference type="eggNOG" id="KOG3668">
    <property type="taxonomic scope" value="Eukaryota"/>
</dbReference>
<dbReference type="GeneTree" id="ENSGT00940000155101"/>
<dbReference type="HOGENOM" id="CLU_046509_0_0_1"/>
<dbReference type="InParanoid" id="P53811"/>
<dbReference type="OMA" id="NELKPDC"/>
<dbReference type="OrthoDB" id="18453at2759"/>
<dbReference type="PhylomeDB" id="P53811"/>
<dbReference type="TreeFam" id="TF313279"/>
<dbReference type="Reactome" id="R-MMU-1483196">
    <property type="pathway name" value="PI and PC transport between ER and Golgi membranes"/>
</dbReference>
<dbReference type="BioGRID-ORCS" id="56305">
    <property type="hits" value="5 hits in 80 CRISPR screens"/>
</dbReference>
<dbReference type="ChiTaRS" id="Pitpnb">
    <property type="organism name" value="mouse"/>
</dbReference>
<dbReference type="PRO" id="PR:P53811"/>
<dbReference type="Proteomes" id="UP000000589">
    <property type="component" value="Chromosome 5"/>
</dbReference>
<dbReference type="RNAct" id="P53811">
    <property type="molecule type" value="protein"/>
</dbReference>
<dbReference type="Bgee" id="ENSMUSG00000050017">
    <property type="expression patterns" value="Expressed in condyle and 259 other cell types or tissues"/>
</dbReference>
<dbReference type="ExpressionAtlas" id="P53811">
    <property type="expression patterns" value="baseline and differential"/>
</dbReference>
<dbReference type="GO" id="GO:0005789">
    <property type="term" value="C:endoplasmic reticulum membrane"/>
    <property type="evidence" value="ECO:0000250"/>
    <property type="project" value="UniProtKB"/>
</dbReference>
<dbReference type="GO" id="GO:0005794">
    <property type="term" value="C:Golgi apparatus"/>
    <property type="evidence" value="ECO:0000314"/>
    <property type="project" value="UniProtKB"/>
</dbReference>
<dbReference type="GO" id="GO:0000139">
    <property type="term" value="C:Golgi membrane"/>
    <property type="evidence" value="ECO:0000250"/>
    <property type="project" value="UniProtKB"/>
</dbReference>
<dbReference type="GO" id="GO:0120019">
    <property type="term" value="F:phosphatidylcholine transfer activity"/>
    <property type="evidence" value="ECO:0000250"/>
    <property type="project" value="UniProtKB"/>
</dbReference>
<dbReference type="GO" id="GO:0008526">
    <property type="term" value="F:phosphatidylinositol transfer activity"/>
    <property type="evidence" value="ECO:0000250"/>
    <property type="project" value="UniProtKB"/>
</dbReference>
<dbReference type="GO" id="GO:0005543">
    <property type="term" value="F:phospholipid binding"/>
    <property type="evidence" value="ECO:0000247"/>
    <property type="project" value="MGI"/>
</dbReference>
<dbReference type="GO" id="GO:0140338">
    <property type="term" value="F:sphingomyelin transfer activity"/>
    <property type="evidence" value="ECO:0000250"/>
    <property type="project" value="UniProtKB"/>
</dbReference>
<dbReference type="GO" id="GO:0001701">
    <property type="term" value="P:in utero embryonic development"/>
    <property type="evidence" value="ECO:0000315"/>
    <property type="project" value="MGI"/>
</dbReference>
<dbReference type="GO" id="GO:0006890">
    <property type="term" value="P:retrograde vesicle-mediated transport, Golgi to endoplasmic reticulum"/>
    <property type="evidence" value="ECO:0000250"/>
    <property type="project" value="UniProtKB"/>
</dbReference>
<dbReference type="CDD" id="cd08888">
    <property type="entry name" value="SRPBCC_PITPNA-B_like"/>
    <property type="match status" value="1"/>
</dbReference>
<dbReference type="FunFam" id="3.30.530.20:FF:000004">
    <property type="entry name" value="Phosphatidylinositol transfer protein alpha isoform"/>
    <property type="match status" value="1"/>
</dbReference>
<dbReference type="Gene3D" id="3.30.530.20">
    <property type="match status" value="1"/>
</dbReference>
<dbReference type="InterPro" id="IPR001666">
    <property type="entry name" value="PI_transfer"/>
</dbReference>
<dbReference type="InterPro" id="IPR055261">
    <property type="entry name" value="PI_transfer_N"/>
</dbReference>
<dbReference type="InterPro" id="IPR023393">
    <property type="entry name" value="START-like_dom_sf"/>
</dbReference>
<dbReference type="PANTHER" id="PTHR10658">
    <property type="entry name" value="PHOSPHATIDYLINOSITOL TRANSFER PROTEIN"/>
    <property type="match status" value="1"/>
</dbReference>
<dbReference type="PANTHER" id="PTHR10658:SF27">
    <property type="entry name" value="PHOSPHATIDYLINOSITOL TRANSFER PROTEIN BETA ISOFORM"/>
    <property type="match status" value="1"/>
</dbReference>
<dbReference type="Pfam" id="PF02121">
    <property type="entry name" value="IP_trans"/>
    <property type="match status" value="1"/>
</dbReference>
<dbReference type="PRINTS" id="PR00391">
    <property type="entry name" value="PITRANSFER"/>
</dbReference>
<dbReference type="SUPFAM" id="SSF55961">
    <property type="entry name" value="Bet v1-like"/>
    <property type="match status" value="1"/>
</dbReference>
<accession>P53811</accession>
<organism>
    <name type="scientific">Mus musculus</name>
    <name type="common">Mouse</name>
    <dbReference type="NCBI Taxonomy" id="10090"/>
    <lineage>
        <taxon>Eukaryota</taxon>
        <taxon>Metazoa</taxon>
        <taxon>Chordata</taxon>
        <taxon>Craniata</taxon>
        <taxon>Vertebrata</taxon>
        <taxon>Euteleostomi</taxon>
        <taxon>Mammalia</taxon>
        <taxon>Eutheria</taxon>
        <taxon>Euarchontoglires</taxon>
        <taxon>Glires</taxon>
        <taxon>Rodentia</taxon>
        <taxon>Myomorpha</taxon>
        <taxon>Muroidea</taxon>
        <taxon>Muridae</taxon>
        <taxon>Murinae</taxon>
        <taxon>Mus</taxon>
        <taxon>Mus</taxon>
    </lineage>
</organism>
<feature type="chain" id="PRO_0000191644" description="Phosphatidylinositol transfer protein beta isoform">
    <location>
        <begin position="1"/>
        <end position="271"/>
    </location>
</feature>
<feature type="modified residue" description="N6-acetyllysine" evidence="1">
    <location>
        <position position="215"/>
    </location>
</feature>
<feature type="modified residue" description="Phosphoserine; by PKC" evidence="4">
    <location>
        <position position="262"/>
    </location>
</feature>
<feature type="mutagenesis site" description="No effect on phosphorylation by PKC; abolishes phospholipid transfer activity." evidence="4">
    <original>S</original>
    <variation>A</variation>
    <location>
        <position position="165"/>
    </location>
</feature>
<feature type="mutagenesis site" description="Abolishes phosphorylation by PKC and impairs Golgi targeting; no effect on phospholipid transfer activity." evidence="4">
    <original>S</original>
    <variation>A</variation>
    <location>
        <position position="262"/>
    </location>
</feature>
<gene>
    <name type="primary">Pitpnb</name>
</gene>
<protein>
    <recommendedName>
        <fullName>Phosphatidylinositol transfer protein beta isoform</fullName>
        <shortName>PI-TP-beta</shortName>
        <shortName>PtdIns transfer protein beta</shortName>
        <shortName>PtdInsTP beta</shortName>
    </recommendedName>
</protein>
<evidence type="ECO:0000250" key="1">
    <source>
        <dbReference type="UniProtKB" id="P48739"/>
    </source>
</evidence>
<evidence type="ECO:0000250" key="2">
    <source>
        <dbReference type="UniProtKB" id="P53812"/>
    </source>
</evidence>
<evidence type="ECO:0000250" key="3">
    <source>
        <dbReference type="UniProtKB" id="Q9TR36"/>
    </source>
</evidence>
<evidence type="ECO:0000269" key="4">
    <source>
    </source>
</evidence>
<evidence type="ECO:0000269" key="5">
    <source>
    </source>
</evidence>
<evidence type="ECO:0000305" key="6"/>
<proteinExistence type="evidence at protein level"/>